<comment type="function">
    <text evidence="5">Recognizes and hydrolyzes the peptide bond at the C-terminal Gly of ubiquitin. Involved in the processing of poly-ubiquitin precursors as well as that of ubiquitinated proteins.</text>
</comment>
<comment type="catalytic activity">
    <reaction>
        <text>Thiol-dependent hydrolysis of ester, thioester, amide, peptide and isopeptide bonds formed by the C-terminal Gly of ubiquitin (a 76-residue protein attached to proteins as an intracellular targeting signal).</text>
        <dbReference type="EC" id="3.4.19.12"/>
    </reaction>
</comment>
<comment type="similarity">
    <text evidence="6">Belongs to the peptidase C19 family.</text>
</comment>
<proteinExistence type="evidence at protein level"/>
<organism>
    <name type="scientific">Arabidopsis thaliana</name>
    <name type="common">Mouse-ear cress</name>
    <dbReference type="NCBI Taxonomy" id="3702"/>
    <lineage>
        <taxon>Eukaryota</taxon>
        <taxon>Viridiplantae</taxon>
        <taxon>Streptophyta</taxon>
        <taxon>Embryophyta</taxon>
        <taxon>Tracheophyta</taxon>
        <taxon>Spermatophyta</taxon>
        <taxon>Magnoliopsida</taxon>
        <taxon>eudicotyledons</taxon>
        <taxon>Gunneridae</taxon>
        <taxon>Pentapetalae</taxon>
        <taxon>rosids</taxon>
        <taxon>malvids</taxon>
        <taxon>Brassicales</taxon>
        <taxon>Brassicaceae</taxon>
        <taxon>Camelineae</taxon>
        <taxon>Arabidopsis</taxon>
    </lineage>
</organism>
<protein>
    <recommendedName>
        <fullName>Ubiquitin carboxyl-terminal hydrolase 5</fullName>
        <ecNumber>3.4.19.12</ecNumber>
    </recommendedName>
    <alternativeName>
        <fullName>Deubiquitinating enzyme 5</fullName>
        <shortName>AtUBP5</shortName>
    </alternativeName>
    <alternativeName>
        <fullName>Ubiquitin thioesterase 5</fullName>
    </alternativeName>
    <alternativeName>
        <fullName>Ubiquitin-specific-processing protease 5</fullName>
    </alternativeName>
</protein>
<keyword id="KW-0378">Hydrolase</keyword>
<keyword id="KW-0645">Protease</keyword>
<keyword id="KW-1185">Reference proteome</keyword>
<keyword id="KW-0788">Thiol protease</keyword>
<keyword id="KW-0833">Ubl conjugation pathway</keyword>
<reference key="1">
    <citation type="journal article" date="2000" name="Arch. Biochem. Biophys.">
        <title>Ubiquitin-specific proteases from Arabidopsis thaliana: cloning of AtUBP5 and analysis of substrate specificity of AtUBP3, AtUBP4, and AtUBP5 using Escherichia coli in vivo and in vitro assays.</title>
        <authorList>
            <person name="Rao-Naik C."/>
            <person name="Chandler J.S."/>
            <person name="McArdle B."/>
            <person name="Callis J."/>
        </authorList>
    </citation>
    <scope>NUCLEOTIDE SEQUENCE [MRNA]</scope>
    <scope>FUNCTION</scope>
    <scope>MUTAGENESIS OF CYS-326</scope>
    <source>
        <strain>cv. Landsberg erecta</strain>
        <tissue>Flower</tissue>
    </source>
</reference>
<reference key="2">
    <citation type="journal article" date="1999" name="Nature">
        <title>Sequence and analysis of chromosome 2 of the plant Arabidopsis thaliana.</title>
        <authorList>
            <person name="Lin X."/>
            <person name="Kaul S."/>
            <person name="Rounsley S.D."/>
            <person name="Shea T.P."/>
            <person name="Benito M.-I."/>
            <person name="Town C.D."/>
            <person name="Fujii C.Y."/>
            <person name="Mason T.M."/>
            <person name="Bowman C.L."/>
            <person name="Barnstead M.E."/>
            <person name="Feldblyum T.V."/>
            <person name="Buell C.R."/>
            <person name="Ketchum K.A."/>
            <person name="Lee J.J."/>
            <person name="Ronning C.M."/>
            <person name="Koo H.L."/>
            <person name="Moffat K.S."/>
            <person name="Cronin L.A."/>
            <person name="Shen M."/>
            <person name="Pai G."/>
            <person name="Van Aken S."/>
            <person name="Umayam L."/>
            <person name="Tallon L.J."/>
            <person name="Gill J.E."/>
            <person name="Adams M.D."/>
            <person name="Carrera A.J."/>
            <person name="Creasy T.H."/>
            <person name="Goodman H.M."/>
            <person name="Somerville C.R."/>
            <person name="Copenhaver G.P."/>
            <person name="Preuss D."/>
            <person name="Nierman W.C."/>
            <person name="White O."/>
            <person name="Eisen J.A."/>
            <person name="Salzberg S.L."/>
            <person name="Fraser C.M."/>
            <person name="Venter J.C."/>
        </authorList>
    </citation>
    <scope>NUCLEOTIDE SEQUENCE [LARGE SCALE GENOMIC DNA]</scope>
    <source>
        <strain>cv. Columbia</strain>
    </source>
</reference>
<reference key="3">
    <citation type="journal article" date="2017" name="Plant J.">
        <title>Araport11: a complete reannotation of the Arabidopsis thaliana reference genome.</title>
        <authorList>
            <person name="Cheng C.Y."/>
            <person name="Krishnakumar V."/>
            <person name="Chan A.P."/>
            <person name="Thibaud-Nissen F."/>
            <person name="Schobel S."/>
            <person name="Town C.D."/>
        </authorList>
    </citation>
    <scope>GENOME REANNOTATION</scope>
    <source>
        <strain>cv. Columbia</strain>
    </source>
</reference>
<reference key="4">
    <citation type="journal article" date="2003" name="Science">
        <title>Empirical analysis of transcriptional activity in the Arabidopsis genome.</title>
        <authorList>
            <person name="Yamada K."/>
            <person name="Lim J."/>
            <person name="Dale J.M."/>
            <person name="Chen H."/>
            <person name="Shinn P."/>
            <person name="Palm C.J."/>
            <person name="Southwick A.M."/>
            <person name="Wu H.C."/>
            <person name="Kim C.J."/>
            <person name="Nguyen M."/>
            <person name="Pham P.K."/>
            <person name="Cheuk R.F."/>
            <person name="Karlin-Newmann G."/>
            <person name="Liu S.X."/>
            <person name="Lam B."/>
            <person name="Sakano H."/>
            <person name="Wu T."/>
            <person name="Yu G."/>
            <person name="Miranda M."/>
            <person name="Quach H.L."/>
            <person name="Tripp M."/>
            <person name="Chang C.H."/>
            <person name="Lee J.M."/>
            <person name="Toriumi M.J."/>
            <person name="Chan M.M."/>
            <person name="Tang C.C."/>
            <person name="Onodera C.S."/>
            <person name="Deng J.M."/>
            <person name="Akiyama K."/>
            <person name="Ansari Y."/>
            <person name="Arakawa T."/>
            <person name="Banh J."/>
            <person name="Banno F."/>
            <person name="Bowser L."/>
            <person name="Brooks S.Y."/>
            <person name="Carninci P."/>
            <person name="Chao Q."/>
            <person name="Choy N."/>
            <person name="Enju A."/>
            <person name="Goldsmith A.D."/>
            <person name="Gurjal M."/>
            <person name="Hansen N.F."/>
            <person name="Hayashizaki Y."/>
            <person name="Johnson-Hopson C."/>
            <person name="Hsuan V.W."/>
            <person name="Iida K."/>
            <person name="Karnes M."/>
            <person name="Khan S."/>
            <person name="Koesema E."/>
            <person name="Ishida J."/>
            <person name="Jiang P.X."/>
            <person name="Jones T."/>
            <person name="Kawai J."/>
            <person name="Kamiya A."/>
            <person name="Meyers C."/>
            <person name="Nakajima M."/>
            <person name="Narusaka M."/>
            <person name="Seki M."/>
            <person name="Sakurai T."/>
            <person name="Satou M."/>
            <person name="Tamse R."/>
            <person name="Vaysberg M."/>
            <person name="Wallender E.K."/>
            <person name="Wong C."/>
            <person name="Yamamura Y."/>
            <person name="Yuan S."/>
            <person name="Shinozaki K."/>
            <person name="Davis R.W."/>
            <person name="Theologis A."/>
            <person name="Ecker J.R."/>
        </authorList>
    </citation>
    <scope>NUCLEOTIDE SEQUENCE [LARGE SCALE MRNA]</scope>
    <source>
        <strain>cv. Columbia</strain>
    </source>
</reference>
<reference key="5">
    <citation type="journal article" date="2000" name="Plant Physiol.">
        <title>The ubiquitin-specific protease family from Arabidopsis. AtUBP1 and 2 are required for the resistance to the amino acid analog canavanine.</title>
        <authorList>
            <person name="Yan N."/>
            <person name="Doelling J.H."/>
            <person name="Falbel T.G."/>
            <person name="Durski A.M."/>
            <person name="Vierstra R.D."/>
        </authorList>
    </citation>
    <scope>GENE FAMILY ORGANIZATION</scope>
    <scope>NOMENCLATURE</scope>
</reference>
<sequence>MAEVSMGSSSSSTDLSPEEERVFIRDIAIAAEANSKEGDTFYLITQRWWQEWIEYVNQDQPCNTNDGSSLSEHCDSPGSSTLKKPSRIDNSDLIYDSSLEDPSNTSEIIETLQEGRDYVLLPQEVWNQLRSWYGGGPTLARRVISSGLSQTELAVEVYPLRLQLLLMPKSDHSAIRISKKETIRELHRRACEIFDLDSEHVRIWDYYGHQKYSLMNDLDKTLDDANLQMDQDILVEVLDINGTLSSAHIQSAQENGLVDGDSTSILIEPSKSSLAAAGGFSSSRNAFRTGSVEVSQSFDNTYSSTGVTTRGSTAGLTGLLNLGNTCFMNSAIQCLVHTPEFASYFQEDYHQEINWQNPLGMVGELALAFGDLLRKLWAPGRTPIAPRPFKAKLARFAPQFSGYNQHDSQELLAFLLDGLHEDLNRVKHKPYINSRDADGRPDEEVADEFWKNHIARNDSIIVDVCQGQYKSTLVCPICNKVSVTFDPFMYLSLPLQFNTTRAITVTVFSCDKTALPSTITVNVSKQGRCRDLIQALTNACSLKQSEELKLAEIRNNFIHRLFEDPLIPLSSIKDDDHLAAYKLSKSSENTTLLRLVLRRRDQKAGERESTVQLKPCGTPLLSSASCGDALTKGKIHCLVQNMLSPFRREESVGKKGNSDSSIPERRSARFNNTEEEDKVGGLKKAKKSNSSDLGASKLSLQLIDEDNKTINLPDNEAEAMKLPSSATVTIYLDWTPELSGMYDITCLESLPEVLKYGPTTKKARSEPLSLYACLEAFLREEPLVPDEMWFCPQCNERRQASKKLDLWRLPEVLVIHLKRFSYSRSMKHKLETFVNFPIHDLDLTKYVANKNLSQPQLYELYALTNHYGGMGSGHYTAHIKLLDDSRWYNFDDSHISHINEDDVKSGAAYVLFYRRKSDAGGKMT</sequence>
<dbReference type="EC" id="3.4.19.12"/>
<dbReference type="EMBL" id="AF048705">
    <property type="protein sequence ID" value="AAF21246.1"/>
    <property type="molecule type" value="mRNA"/>
</dbReference>
<dbReference type="EMBL" id="AC002409">
    <property type="protein sequence ID" value="AAB86453.2"/>
    <property type="molecule type" value="Genomic_DNA"/>
</dbReference>
<dbReference type="EMBL" id="CP002685">
    <property type="protein sequence ID" value="AEC09900.1"/>
    <property type="molecule type" value="Genomic_DNA"/>
</dbReference>
<dbReference type="EMBL" id="CP002685">
    <property type="protein sequence ID" value="ANM61508.1"/>
    <property type="molecule type" value="Genomic_DNA"/>
</dbReference>
<dbReference type="EMBL" id="AY099701">
    <property type="protein sequence ID" value="AAM20552.1"/>
    <property type="molecule type" value="mRNA"/>
</dbReference>
<dbReference type="EMBL" id="BT000300">
    <property type="protein sequence ID" value="AAN15619.1"/>
    <property type="molecule type" value="mRNA"/>
</dbReference>
<dbReference type="PIR" id="T00757">
    <property type="entry name" value="T00757"/>
</dbReference>
<dbReference type="RefSeq" id="NP_001323724.1">
    <property type="nucleotide sequence ID" value="NM_001336876.1"/>
</dbReference>
<dbReference type="RefSeq" id="NP_565944.1">
    <property type="nucleotide sequence ID" value="NM_129656.4"/>
</dbReference>
<dbReference type="SMR" id="O22207"/>
<dbReference type="BioGRID" id="4028">
    <property type="interactions" value="2"/>
</dbReference>
<dbReference type="FunCoup" id="O22207">
    <property type="interactions" value="4183"/>
</dbReference>
<dbReference type="IntAct" id="O22207">
    <property type="interactions" value="1"/>
</dbReference>
<dbReference type="STRING" id="3702.O22207"/>
<dbReference type="MEROPS" id="C19.093"/>
<dbReference type="iPTMnet" id="O22207"/>
<dbReference type="PaxDb" id="3702-AT2G40930.1"/>
<dbReference type="ProteomicsDB" id="233058"/>
<dbReference type="EnsemblPlants" id="AT2G40930.1">
    <property type="protein sequence ID" value="AT2G40930.1"/>
    <property type="gene ID" value="AT2G40930"/>
</dbReference>
<dbReference type="EnsemblPlants" id="AT2G40930.2">
    <property type="protein sequence ID" value="AT2G40930.2"/>
    <property type="gene ID" value="AT2G40930"/>
</dbReference>
<dbReference type="GeneID" id="818691"/>
<dbReference type="Gramene" id="AT2G40930.1">
    <property type="protein sequence ID" value="AT2G40930.1"/>
    <property type="gene ID" value="AT2G40930"/>
</dbReference>
<dbReference type="Gramene" id="AT2G40930.2">
    <property type="protein sequence ID" value="AT2G40930.2"/>
    <property type="gene ID" value="AT2G40930"/>
</dbReference>
<dbReference type="KEGG" id="ath:AT2G40930"/>
<dbReference type="Araport" id="AT2G40930"/>
<dbReference type="TAIR" id="AT2G40930">
    <property type="gene designation" value="UBP5"/>
</dbReference>
<dbReference type="eggNOG" id="KOG1870">
    <property type="taxonomic scope" value="Eukaryota"/>
</dbReference>
<dbReference type="HOGENOM" id="CLU_001060_7_1_1"/>
<dbReference type="InParanoid" id="O22207"/>
<dbReference type="OMA" id="RRKHALM"/>
<dbReference type="OrthoDB" id="292964at2759"/>
<dbReference type="PhylomeDB" id="O22207"/>
<dbReference type="PRO" id="PR:O22207"/>
<dbReference type="Proteomes" id="UP000006548">
    <property type="component" value="Chromosome 2"/>
</dbReference>
<dbReference type="ExpressionAtlas" id="O22207">
    <property type="expression patterns" value="baseline and differential"/>
</dbReference>
<dbReference type="GO" id="GO:0005634">
    <property type="term" value="C:nucleus"/>
    <property type="evidence" value="ECO:0000250"/>
    <property type="project" value="TAIR"/>
</dbReference>
<dbReference type="GO" id="GO:0004843">
    <property type="term" value="F:cysteine-type deubiquitinase activity"/>
    <property type="evidence" value="ECO:0007669"/>
    <property type="project" value="UniProtKB-EC"/>
</dbReference>
<dbReference type="GO" id="GO:0016579">
    <property type="term" value="P:protein deubiquitination"/>
    <property type="evidence" value="ECO:0007669"/>
    <property type="project" value="InterPro"/>
</dbReference>
<dbReference type="GO" id="GO:0006511">
    <property type="term" value="P:ubiquitin-dependent protein catabolic process"/>
    <property type="evidence" value="ECO:0000304"/>
    <property type="project" value="TAIR"/>
</dbReference>
<dbReference type="CDD" id="cd02674">
    <property type="entry name" value="Peptidase_C19R"/>
    <property type="match status" value="1"/>
</dbReference>
<dbReference type="FunFam" id="3.90.70.10:FF:000402">
    <property type="entry name" value="Ubiquitin carboxyl-terminal hydrolase 5"/>
    <property type="match status" value="1"/>
</dbReference>
<dbReference type="Gene3D" id="3.90.70.10">
    <property type="entry name" value="Cysteine proteinases"/>
    <property type="match status" value="2"/>
</dbReference>
<dbReference type="Gene3D" id="3.30.2230.10">
    <property type="entry name" value="DUSP-like"/>
    <property type="match status" value="1"/>
</dbReference>
<dbReference type="Gene3D" id="3.10.20.90">
    <property type="entry name" value="Phosphatidylinositol 3-kinase Catalytic Subunit, Chain A, domain 1"/>
    <property type="match status" value="1"/>
</dbReference>
<dbReference type="InterPro" id="IPR035927">
    <property type="entry name" value="DUSP-like_sf"/>
</dbReference>
<dbReference type="InterPro" id="IPR038765">
    <property type="entry name" value="Papain-like_cys_pep_sf"/>
</dbReference>
<dbReference type="InterPro" id="IPR006615">
    <property type="entry name" value="Pept_C19_DUSP"/>
</dbReference>
<dbReference type="InterPro" id="IPR001394">
    <property type="entry name" value="Peptidase_C19_UCH"/>
</dbReference>
<dbReference type="InterPro" id="IPR050185">
    <property type="entry name" value="Ub_carboxyl-term_hydrolase"/>
</dbReference>
<dbReference type="InterPro" id="IPR018200">
    <property type="entry name" value="USP_CS"/>
</dbReference>
<dbReference type="InterPro" id="IPR028889">
    <property type="entry name" value="USP_dom"/>
</dbReference>
<dbReference type="PANTHER" id="PTHR21646">
    <property type="entry name" value="UBIQUITIN CARBOXYL-TERMINAL HYDROLASE"/>
    <property type="match status" value="1"/>
</dbReference>
<dbReference type="PANTHER" id="PTHR21646:SF18">
    <property type="entry name" value="UBIQUITIN CARBOXYL-TERMINAL HYDROLASE 5"/>
    <property type="match status" value="1"/>
</dbReference>
<dbReference type="Pfam" id="PF06337">
    <property type="entry name" value="DUSP"/>
    <property type="match status" value="1"/>
</dbReference>
<dbReference type="Pfam" id="PF25242">
    <property type="entry name" value="Ubiquitin_UBP8"/>
    <property type="match status" value="1"/>
</dbReference>
<dbReference type="Pfam" id="PF00443">
    <property type="entry name" value="UCH"/>
    <property type="match status" value="1"/>
</dbReference>
<dbReference type="SMART" id="SM00695">
    <property type="entry name" value="DUSP"/>
    <property type="match status" value="1"/>
</dbReference>
<dbReference type="SUPFAM" id="SSF54001">
    <property type="entry name" value="Cysteine proteinases"/>
    <property type="match status" value="1"/>
</dbReference>
<dbReference type="SUPFAM" id="SSF143791">
    <property type="entry name" value="DUSP-like"/>
    <property type="match status" value="1"/>
</dbReference>
<dbReference type="PROSITE" id="PS51283">
    <property type="entry name" value="DUSP"/>
    <property type="match status" value="1"/>
</dbReference>
<dbReference type="PROSITE" id="PS00972">
    <property type="entry name" value="USP_1"/>
    <property type="match status" value="1"/>
</dbReference>
<dbReference type="PROSITE" id="PS00973">
    <property type="entry name" value="USP_2"/>
    <property type="match status" value="1"/>
</dbReference>
<dbReference type="PROSITE" id="PS50235">
    <property type="entry name" value="USP_3"/>
    <property type="match status" value="1"/>
</dbReference>
<name>UBP5_ARATH</name>
<gene>
    <name type="primary">UBP5</name>
    <name type="ordered locus">At2g40930</name>
    <name type="ORF">T20B5.13</name>
</gene>
<feature type="chain" id="PRO_0000080696" description="Ubiquitin carboxyl-terminal hydrolase 5">
    <location>
        <begin position="1"/>
        <end position="924"/>
    </location>
</feature>
<feature type="domain" description="DUSP" evidence="1">
    <location>
        <begin position="15"/>
        <end position="145"/>
    </location>
</feature>
<feature type="domain" description="USP">
    <location>
        <begin position="317"/>
        <end position="916"/>
    </location>
</feature>
<feature type="region of interest" description="Disordered" evidence="4">
    <location>
        <begin position="64"/>
        <end position="87"/>
    </location>
</feature>
<feature type="region of interest" description="Disordered" evidence="4">
    <location>
        <begin position="648"/>
        <end position="690"/>
    </location>
</feature>
<feature type="compositionally biased region" description="Polar residues" evidence="4">
    <location>
        <begin position="64"/>
        <end position="83"/>
    </location>
</feature>
<feature type="compositionally biased region" description="Basic and acidic residues" evidence="4">
    <location>
        <begin position="648"/>
        <end position="667"/>
    </location>
</feature>
<feature type="active site" description="Nucleophile">
    <location>
        <position position="326"/>
    </location>
</feature>
<feature type="active site" description="Proton acceptor" evidence="2 3">
    <location>
        <position position="874"/>
    </location>
</feature>
<feature type="mutagenesis site" description="Loss of activity." evidence="5">
    <original>C</original>
    <variation>S</variation>
    <location>
        <position position="326"/>
    </location>
</feature>
<evidence type="ECO:0000255" key="1">
    <source>
        <dbReference type="PROSITE-ProRule" id="PRU00613"/>
    </source>
</evidence>
<evidence type="ECO:0000255" key="2">
    <source>
        <dbReference type="PROSITE-ProRule" id="PRU10092"/>
    </source>
</evidence>
<evidence type="ECO:0000255" key="3">
    <source>
        <dbReference type="PROSITE-ProRule" id="PRU10093"/>
    </source>
</evidence>
<evidence type="ECO:0000256" key="4">
    <source>
        <dbReference type="SAM" id="MobiDB-lite"/>
    </source>
</evidence>
<evidence type="ECO:0000269" key="5">
    <source>
    </source>
</evidence>
<evidence type="ECO:0000305" key="6"/>
<accession>O22207</accession>
<accession>Q9SEX3</accession>